<dbReference type="EC" id="6.3.4.20" evidence="1"/>
<dbReference type="EMBL" id="CP000970">
    <property type="protein sequence ID" value="ACB16036.1"/>
    <property type="molecule type" value="Genomic_DNA"/>
</dbReference>
<dbReference type="RefSeq" id="WP_000817228.1">
    <property type="nucleotide sequence ID" value="NC_010498.1"/>
</dbReference>
<dbReference type="SMR" id="B1LJK1"/>
<dbReference type="KEGG" id="ecm:EcSMS35_0487"/>
<dbReference type="HOGENOM" id="CLU_081854_0_0_6"/>
<dbReference type="UniPathway" id="UPA00391"/>
<dbReference type="Proteomes" id="UP000007011">
    <property type="component" value="Chromosome"/>
</dbReference>
<dbReference type="GO" id="GO:0005524">
    <property type="term" value="F:ATP binding"/>
    <property type="evidence" value="ECO:0007669"/>
    <property type="project" value="UniProtKB-UniRule"/>
</dbReference>
<dbReference type="GO" id="GO:0016879">
    <property type="term" value="F:ligase activity, forming carbon-nitrogen bonds"/>
    <property type="evidence" value="ECO:0007669"/>
    <property type="project" value="UniProtKB-UniRule"/>
</dbReference>
<dbReference type="GO" id="GO:0008270">
    <property type="term" value="F:zinc ion binding"/>
    <property type="evidence" value="ECO:0007669"/>
    <property type="project" value="UniProtKB-UniRule"/>
</dbReference>
<dbReference type="GO" id="GO:0008616">
    <property type="term" value="P:queuosine biosynthetic process"/>
    <property type="evidence" value="ECO:0007669"/>
    <property type="project" value="UniProtKB-UniRule"/>
</dbReference>
<dbReference type="CDD" id="cd01995">
    <property type="entry name" value="QueC-like"/>
    <property type="match status" value="1"/>
</dbReference>
<dbReference type="FunFam" id="3.40.50.620:FF:000017">
    <property type="entry name" value="7-cyano-7-deazaguanine synthase"/>
    <property type="match status" value="1"/>
</dbReference>
<dbReference type="Gene3D" id="3.40.50.620">
    <property type="entry name" value="HUPs"/>
    <property type="match status" value="1"/>
</dbReference>
<dbReference type="HAMAP" id="MF_01633">
    <property type="entry name" value="QueC"/>
    <property type="match status" value="1"/>
</dbReference>
<dbReference type="InterPro" id="IPR018317">
    <property type="entry name" value="QueC"/>
</dbReference>
<dbReference type="InterPro" id="IPR014729">
    <property type="entry name" value="Rossmann-like_a/b/a_fold"/>
</dbReference>
<dbReference type="NCBIfam" id="TIGR00364">
    <property type="entry name" value="7-cyano-7-deazaguanine synthase QueC"/>
    <property type="match status" value="1"/>
</dbReference>
<dbReference type="NCBIfam" id="NF008317">
    <property type="entry name" value="PRK11106.1"/>
    <property type="match status" value="1"/>
</dbReference>
<dbReference type="PANTHER" id="PTHR42914">
    <property type="entry name" value="7-CYANO-7-DEAZAGUANINE SYNTHASE"/>
    <property type="match status" value="1"/>
</dbReference>
<dbReference type="PANTHER" id="PTHR42914:SF1">
    <property type="entry name" value="7-CYANO-7-DEAZAGUANINE SYNTHASE"/>
    <property type="match status" value="1"/>
</dbReference>
<dbReference type="Pfam" id="PF06508">
    <property type="entry name" value="QueC"/>
    <property type="match status" value="1"/>
</dbReference>
<dbReference type="PIRSF" id="PIRSF006293">
    <property type="entry name" value="ExsB"/>
    <property type="match status" value="1"/>
</dbReference>
<dbReference type="SUPFAM" id="SSF52402">
    <property type="entry name" value="Adenine nucleotide alpha hydrolases-like"/>
    <property type="match status" value="1"/>
</dbReference>
<sequence length="231" mass="25438">MKRAVVVFSGGQDSTTCLVQALQQYDEVHCVTFDYGQRHRAEIDVARELALKLGARAHKVLDVTLLNELAVSSLTRDSIPVPDYEPEADGIPNTFVPGRNILFLTLAAIYAYQVKAEAVITGVCETDFSGYPDCRDEFVKALNHAVSLGMAKDIRFETPLMWIDKAETWALADYYGKLDLVRNETLTCYNGIKGDGCGHCAACNLRANGLNHYLADKPTVMAAMKQKTGLN</sequence>
<accession>B1LJK1</accession>
<comment type="function">
    <text evidence="1">Catalyzes the ATP-dependent conversion of 7-carboxy-7-deazaguanine (CDG) to 7-cyano-7-deazaguanine (preQ(0)).</text>
</comment>
<comment type="catalytic activity">
    <reaction evidence="1">
        <text>7-carboxy-7-deazaguanine + NH4(+) + ATP = 7-cyano-7-deazaguanine + ADP + phosphate + H2O + H(+)</text>
        <dbReference type="Rhea" id="RHEA:27982"/>
        <dbReference type="ChEBI" id="CHEBI:15377"/>
        <dbReference type="ChEBI" id="CHEBI:15378"/>
        <dbReference type="ChEBI" id="CHEBI:28938"/>
        <dbReference type="ChEBI" id="CHEBI:30616"/>
        <dbReference type="ChEBI" id="CHEBI:43474"/>
        <dbReference type="ChEBI" id="CHEBI:45075"/>
        <dbReference type="ChEBI" id="CHEBI:61036"/>
        <dbReference type="ChEBI" id="CHEBI:456216"/>
        <dbReference type="EC" id="6.3.4.20"/>
    </reaction>
</comment>
<comment type="cofactor">
    <cofactor evidence="1">
        <name>Zn(2+)</name>
        <dbReference type="ChEBI" id="CHEBI:29105"/>
    </cofactor>
    <text evidence="1">Binds 1 zinc ion per subunit.</text>
</comment>
<comment type="pathway">
    <text evidence="1">Purine metabolism; 7-cyano-7-deazaguanine biosynthesis.</text>
</comment>
<comment type="similarity">
    <text evidence="1">Belongs to the QueC family.</text>
</comment>
<feature type="chain" id="PRO_1000186597" description="7-cyano-7-deazaguanine synthase">
    <location>
        <begin position="1"/>
        <end position="231"/>
    </location>
</feature>
<feature type="binding site" evidence="1">
    <location>
        <begin position="8"/>
        <end position="18"/>
    </location>
    <ligand>
        <name>ATP</name>
        <dbReference type="ChEBI" id="CHEBI:30616"/>
    </ligand>
</feature>
<feature type="binding site" evidence="1">
    <location>
        <position position="188"/>
    </location>
    <ligand>
        <name>Zn(2+)</name>
        <dbReference type="ChEBI" id="CHEBI:29105"/>
    </ligand>
</feature>
<feature type="binding site" evidence="1">
    <location>
        <position position="197"/>
    </location>
    <ligand>
        <name>Zn(2+)</name>
        <dbReference type="ChEBI" id="CHEBI:29105"/>
    </ligand>
</feature>
<feature type="binding site" evidence="1">
    <location>
        <position position="200"/>
    </location>
    <ligand>
        <name>Zn(2+)</name>
        <dbReference type="ChEBI" id="CHEBI:29105"/>
    </ligand>
</feature>
<feature type="binding site" evidence="1">
    <location>
        <position position="203"/>
    </location>
    <ligand>
        <name>Zn(2+)</name>
        <dbReference type="ChEBI" id="CHEBI:29105"/>
    </ligand>
</feature>
<keyword id="KW-0067">ATP-binding</keyword>
<keyword id="KW-0436">Ligase</keyword>
<keyword id="KW-0479">Metal-binding</keyword>
<keyword id="KW-0547">Nucleotide-binding</keyword>
<keyword id="KW-0671">Queuosine biosynthesis</keyword>
<keyword id="KW-0862">Zinc</keyword>
<evidence type="ECO:0000255" key="1">
    <source>
        <dbReference type="HAMAP-Rule" id="MF_01633"/>
    </source>
</evidence>
<gene>
    <name evidence="1" type="primary">queC</name>
    <name type="ordered locus">EcSMS35_0487</name>
</gene>
<name>QUEC_ECOSM</name>
<reference key="1">
    <citation type="journal article" date="2008" name="J. Bacteriol.">
        <title>Insights into the environmental resistance gene pool from the genome sequence of the multidrug-resistant environmental isolate Escherichia coli SMS-3-5.</title>
        <authorList>
            <person name="Fricke W.F."/>
            <person name="Wright M.S."/>
            <person name="Lindell A.H."/>
            <person name="Harkins D.M."/>
            <person name="Baker-Austin C."/>
            <person name="Ravel J."/>
            <person name="Stepanauskas R."/>
        </authorList>
    </citation>
    <scope>NUCLEOTIDE SEQUENCE [LARGE SCALE GENOMIC DNA]</scope>
    <source>
        <strain>SMS-3-5 / SECEC</strain>
    </source>
</reference>
<organism>
    <name type="scientific">Escherichia coli (strain SMS-3-5 / SECEC)</name>
    <dbReference type="NCBI Taxonomy" id="439855"/>
    <lineage>
        <taxon>Bacteria</taxon>
        <taxon>Pseudomonadati</taxon>
        <taxon>Pseudomonadota</taxon>
        <taxon>Gammaproteobacteria</taxon>
        <taxon>Enterobacterales</taxon>
        <taxon>Enterobacteriaceae</taxon>
        <taxon>Escherichia</taxon>
    </lineage>
</organism>
<proteinExistence type="inferred from homology"/>
<protein>
    <recommendedName>
        <fullName evidence="1">7-cyano-7-deazaguanine synthase</fullName>
        <ecNumber evidence="1">6.3.4.20</ecNumber>
    </recommendedName>
    <alternativeName>
        <fullName evidence="1">7-cyano-7-carbaguanine synthase</fullName>
    </alternativeName>
    <alternativeName>
        <fullName evidence="1">PreQ(0) synthase</fullName>
    </alternativeName>
    <alternativeName>
        <fullName evidence="1">Queuosine biosynthesis protein QueC</fullName>
    </alternativeName>
</protein>